<dbReference type="EC" id="3.1.11.5" evidence="1"/>
<dbReference type="EC" id="5.6.2.4" evidence="1"/>
<dbReference type="EMBL" id="L42023">
    <property type="protein sequence ID" value="AAC22966.1"/>
    <property type="molecule type" value="Genomic_DNA"/>
</dbReference>
<dbReference type="PIR" id="D64116">
    <property type="entry name" value="D64116"/>
</dbReference>
<dbReference type="RefSeq" id="NP_439472.1">
    <property type="nucleotide sequence ID" value="NC_000907.1"/>
</dbReference>
<dbReference type="SMR" id="P45157"/>
<dbReference type="STRING" id="71421.HI_1321"/>
<dbReference type="EnsemblBacteria" id="AAC22966">
    <property type="protein sequence ID" value="AAC22966"/>
    <property type="gene ID" value="HI_1321"/>
</dbReference>
<dbReference type="KEGG" id="hin:HI_1321"/>
<dbReference type="PATRIC" id="fig|71421.8.peg.1373"/>
<dbReference type="eggNOG" id="COG1074">
    <property type="taxonomic scope" value="Bacteria"/>
</dbReference>
<dbReference type="HOGENOM" id="CLU_001114_6_0_6"/>
<dbReference type="OrthoDB" id="9810135at2"/>
<dbReference type="PhylomeDB" id="P45157"/>
<dbReference type="BioCyc" id="HINF71421:G1GJ1-1346-MONOMER"/>
<dbReference type="Proteomes" id="UP000000579">
    <property type="component" value="Chromosome"/>
</dbReference>
<dbReference type="GO" id="GO:0005829">
    <property type="term" value="C:cytosol"/>
    <property type="evidence" value="ECO:0000318"/>
    <property type="project" value="GO_Central"/>
</dbReference>
<dbReference type="GO" id="GO:0009338">
    <property type="term" value="C:exodeoxyribonuclease V complex"/>
    <property type="evidence" value="ECO:0000318"/>
    <property type="project" value="GO_Central"/>
</dbReference>
<dbReference type="GO" id="GO:0043138">
    <property type="term" value="F:3'-5' DNA helicase activity"/>
    <property type="evidence" value="ECO:0000318"/>
    <property type="project" value="GO_Central"/>
</dbReference>
<dbReference type="GO" id="GO:0005524">
    <property type="term" value="F:ATP binding"/>
    <property type="evidence" value="ECO:0007669"/>
    <property type="project" value="UniProtKB-UniRule"/>
</dbReference>
<dbReference type="GO" id="GO:0016887">
    <property type="term" value="F:ATP hydrolysis activity"/>
    <property type="evidence" value="ECO:0007669"/>
    <property type="project" value="RHEA"/>
</dbReference>
<dbReference type="GO" id="GO:0003677">
    <property type="term" value="F:DNA binding"/>
    <property type="evidence" value="ECO:0007669"/>
    <property type="project" value="UniProtKB-UniRule"/>
</dbReference>
<dbReference type="GO" id="GO:0008854">
    <property type="term" value="F:exodeoxyribonuclease V activity"/>
    <property type="evidence" value="ECO:0007669"/>
    <property type="project" value="UniProtKB-EC"/>
</dbReference>
<dbReference type="GO" id="GO:0000287">
    <property type="term" value="F:magnesium ion binding"/>
    <property type="evidence" value="ECO:0007669"/>
    <property type="project" value="UniProtKB-UniRule"/>
</dbReference>
<dbReference type="GO" id="GO:0000724">
    <property type="term" value="P:double-strand break repair via homologous recombination"/>
    <property type="evidence" value="ECO:0007669"/>
    <property type="project" value="UniProtKB-UniRule"/>
</dbReference>
<dbReference type="GO" id="GO:0000725">
    <property type="term" value="P:recombinational repair"/>
    <property type="evidence" value="ECO:0000318"/>
    <property type="project" value="GO_Central"/>
</dbReference>
<dbReference type="CDD" id="cd22352">
    <property type="entry name" value="RecB_C-like"/>
    <property type="match status" value="1"/>
</dbReference>
<dbReference type="FunFam" id="3.90.320.10:FF:000033">
    <property type="entry name" value="RecBCD enzyme subunit RecB"/>
    <property type="match status" value="1"/>
</dbReference>
<dbReference type="Gene3D" id="3.90.320.10">
    <property type="match status" value="1"/>
</dbReference>
<dbReference type="Gene3D" id="3.40.50.300">
    <property type="entry name" value="P-loop containing nucleotide triphosphate hydrolases"/>
    <property type="match status" value="2"/>
</dbReference>
<dbReference type="Gene3D" id="1.10.486.10">
    <property type="entry name" value="PCRA, domain 4"/>
    <property type="match status" value="1"/>
</dbReference>
<dbReference type="Gene3D" id="1.10.3170.10">
    <property type="entry name" value="Recbcd, chain B, domain 2"/>
    <property type="match status" value="1"/>
</dbReference>
<dbReference type="HAMAP" id="MF_01485">
    <property type="entry name" value="RecB"/>
    <property type="match status" value="1"/>
</dbReference>
<dbReference type="InterPro" id="IPR014017">
    <property type="entry name" value="DNA_helicase_UvrD-like_C"/>
</dbReference>
<dbReference type="InterPro" id="IPR000212">
    <property type="entry name" value="DNA_helicase_UvrD/REP"/>
</dbReference>
<dbReference type="InterPro" id="IPR027417">
    <property type="entry name" value="P-loop_NTPase"/>
</dbReference>
<dbReference type="InterPro" id="IPR011604">
    <property type="entry name" value="PDDEXK-like_dom_sf"/>
</dbReference>
<dbReference type="InterPro" id="IPR038726">
    <property type="entry name" value="PDDEXK_AddAB-type"/>
</dbReference>
<dbReference type="InterPro" id="IPR004586">
    <property type="entry name" value="RecB"/>
</dbReference>
<dbReference type="InterPro" id="IPR011335">
    <property type="entry name" value="Restrct_endonuc-II-like"/>
</dbReference>
<dbReference type="InterPro" id="IPR014016">
    <property type="entry name" value="UvrD-like_ATP-bd"/>
</dbReference>
<dbReference type="NCBIfam" id="TIGR00609">
    <property type="entry name" value="recB"/>
    <property type="match status" value="1"/>
</dbReference>
<dbReference type="PANTHER" id="PTHR11070:SF23">
    <property type="entry name" value="RECBCD ENZYME SUBUNIT RECB"/>
    <property type="match status" value="1"/>
</dbReference>
<dbReference type="PANTHER" id="PTHR11070">
    <property type="entry name" value="UVRD / RECB / PCRA DNA HELICASE FAMILY MEMBER"/>
    <property type="match status" value="1"/>
</dbReference>
<dbReference type="Pfam" id="PF12705">
    <property type="entry name" value="PDDEXK_1"/>
    <property type="match status" value="1"/>
</dbReference>
<dbReference type="Pfam" id="PF00580">
    <property type="entry name" value="UvrD-helicase"/>
    <property type="match status" value="1"/>
</dbReference>
<dbReference type="Pfam" id="PF13361">
    <property type="entry name" value="UvrD_C"/>
    <property type="match status" value="2"/>
</dbReference>
<dbReference type="SUPFAM" id="SSF52540">
    <property type="entry name" value="P-loop containing nucleoside triphosphate hydrolases"/>
    <property type="match status" value="1"/>
</dbReference>
<dbReference type="SUPFAM" id="SSF52980">
    <property type="entry name" value="Restriction endonuclease-like"/>
    <property type="match status" value="1"/>
</dbReference>
<dbReference type="PROSITE" id="PS51198">
    <property type="entry name" value="UVRD_HELICASE_ATP_BIND"/>
    <property type="match status" value="1"/>
</dbReference>
<dbReference type="PROSITE" id="PS51217">
    <property type="entry name" value="UVRD_HELICASE_CTER"/>
    <property type="match status" value="1"/>
</dbReference>
<gene>
    <name evidence="1" type="primary">recB</name>
    <name type="ordered locus">HI_1321</name>
</gene>
<proteinExistence type="inferred from homology"/>
<protein>
    <recommendedName>
        <fullName evidence="1">RecBCD enzyme subunit RecB</fullName>
        <ecNumber evidence="1">3.1.11.5</ecNumber>
        <ecNumber evidence="1">5.6.2.4</ecNumber>
    </recommendedName>
    <alternativeName>
        <fullName evidence="1">DNA 3'-5' helicase subunit RecB</fullName>
    </alternativeName>
    <alternativeName>
        <fullName evidence="1">Exonuclease V subunit RecB</fullName>
        <shortName evidence="1">ExoV subunit RecB</shortName>
    </alternativeName>
    <alternativeName>
        <fullName evidence="1">Helicase/nuclease RecBCD subunit RecB</fullName>
    </alternativeName>
</protein>
<feature type="chain" id="PRO_0000102047" description="RecBCD enzyme subunit RecB">
    <location>
        <begin position="1"/>
        <end position="1211"/>
    </location>
</feature>
<feature type="domain" description="UvrD-like helicase ATP-binding" evidence="1">
    <location>
        <begin position="1"/>
        <end position="485"/>
    </location>
</feature>
<feature type="domain" description="UvrD-like helicase C-terminal" evidence="1">
    <location>
        <begin position="500"/>
        <end position="772"/>
    </location>
</feature>
<feature type="region of interest" description="DNA-binding and helicase activity, interacts with RecC" evidence="1">
    <location>
        <begin position="1"/>
        <end position="877"/>
    </location>
</feature>
<feature type="region of interest" description="Nuclease activity, interacts with RecD and RecA" evidence="1">
    <location>
        <begin position="927"/>
        <end position="1211"/>
    </location>
</feature>
<feature type="active site" description="For nuclease activity" evidence="1">
    <location>
        <position position="1120"/>
    </location>
</feature>
<feature type="binding site" evidence="1">
    <location>
        <begin position="22"/>
        <end position="29"/>
    </location>
    <ligand>
        <name>ATP</name>
        <dbReference type="ChEBI" id="CHEBI:30616"/>
    </ligand>
</feature>
<feature type="binding site" evidence="1">
    <location>
        <position position="997"/>
    </location>
    <ligand>
        <name>Mg(2+)</name>
        <dbReference type="ChEBI" id="CHEBI:18420"/>
    </ligand>
</feature>
<feature type="binding site" evidence="1">
    <location>
        <position position="1107"/>
    </location>
    <ligand>
        <name>Mg(2+)</name>
        <dbReference type="ChEBI" id="CHEBI:18420"/>
    </ligand>
</feature>
<feature type="binding site" evidence="1">
    <location>
        <position position="1120"/>
    </location>
    <ligand>
        <name>Mg(2+)</name>
        <dbReference type="ChEBI" id="CHEBI:18420"/>
    </ligand>
</feature>
<organism>
    <name type="scientific">Haemophilus influenzae (strain ATCC 51907 / DSM 11121 / KW20 / Rd)</name>
    <dbReference type="NCBI Taxonomy" id="71421"/>
    <lineage>
        <taxon>Bacteria</taxon>
        <taxon>Pseudomonadati</taxon>
        <taxon>Pseudomonadota</taxon>
        <taxon>Gammaproteobacteria</taxon>
        <taxon>Pasteurellales</taxon>
        <taxon>Pasteurellaceae</taxon>
        <taxon>Haemophilus</taxon>
    </lineage>
</organism>
<keyword id="KW-0067">ATP-binding</keyword>
<keyword id="KW-0227">DNA damage</keyword>
<keyword id="KW-0234">DNA repair</keyword>
<keyword id="KW-0238">DNA-binding</keyword>
<keyword id="KW-0269">Exonuclease</keyword>
<keyword id="KW-0347">Helicase</keyword>
<keyword id="KW-0378">Hydrolase</keyword>
<keyword id="KW-0413">Isomerase</keyword>
<keyword id="KW-0460">Magnesium</keyword>
<keyword id="KW-0479">Metal-binding</keyword>
<keyword id="KW-0540">Nuclease</keyword>
<keyword id="KW-0547">Nucleotide-binding</keyword>
<keyword id="KW-1185">Reference proteome</keyword>
<comment type="function">
    <text evidence="1">A helicase/nuclease that prepares dsDNA breaks (DSB) for recombinational DNA repair. Binds to DSBs and unwinds DNA via a highly rapid and processive ATP-dependent bidirectional helicase activity. Unwinds dsDNA until it encounters a Chi (crossover hotspot instigator) sequence from the 3' direction. Cuts ssDNA a few nucleotides 3' to the Chi site. The properties and activities of the enzyme are changed at Chi. The Chi-altered holoenzyme produces a long 3'-ssDNA overhang and facilitates RecA-binding to the ssDNA for homologous DNA recombination and repair. Holoenzyme degrades any linearized DNA that is unable to undergo homologous recombination. In the holoenzyme this subunit contributes ATPase, 3'-5' helicase, exonuclease activity and loads RecA onto ssDNA.</text>
</comment>
<comment type="catalytic activity">
    <reaction evidence="1">
        <text>Exonucleolytic cleavage (in the presence of ATP) in either 5'- to 3'- or 3'- to 5'-direction to yield 5'-phosphooligonucleotides.</text>
        <dbReference type="EC" id="3.1.11.5"/>
    </reaction>
</comment>
<comment type="catalytic activity">
    <reaction evidence="1">
        <text>Couples ATP hydrolysis with the unwinding of duplex DNA by translocating in the 3'-5' direction.</text>
        <dbReference type="EC" id="5.6.2.4"/>
    </reaction>
</comment>
<comment type="catalytic activity">
    <reaction evidence="1">
        <text>ATP + H2O = ADP + phosphate + H(+)</text>
        <dbReference type="Rhea" id="RHEA:13065"/>
        <dbReference type="ChEBI" id="CHEBI:15377"/>
        <dbReference type="ChEBI" id="CHEBI:15378"/>
        <dbReference type="ChEBI" id="CHEBI:30616"/>
        <dbReference type="ChEBI" id="CHEBI:43474"/>
        <dbReference type="ChEBI" id="CHEBI:456216"/>
        <dbReference type="EC" id="5.6.2.4"/>
    </reaction>
</comment>
<comment type="cofactor">
    <cofactor evidence="1">
        <name>Mg(2+)</name>
        <dbReference type="ChEBI" id="CHEBI:18420"/>
    </cofactor>
    <text evidence="1">Binds 1 Mg(2+) ion per subunit.</text>
</comment>
<comment type="subunit">
    <text evidence="1">Heterotrimer of RecB, RecC and RecD. All subunits contribute to DNA-binding. Interacts with RecA.</text>
</comment>
<comment type="domain">
    <text evidence="1">The N-terminal DNA-binding domain is a ssDNA-dependent ATPase and has ATP-dependent 3'-5' helicase function. This domain interacts with RecC.</text>
</comment>
<comment type="domain">
    <text evidence="1">The C-terminal domain has nuclease activity and interacts with RecD. It interacts with RecA, facilitating its loading onto ssDNA.</text>
</comment>
<comment type="miscellaneous">
    <text evidence="1">In the RecBCD complex, RecB has a slow 3'-5' helicase, an exonuclease activity and loads RecA onto ssDNA, RecD has a fast 5'-3' helicase activity, while RecC stimulates the ATPase and processivity of the RecB helicase and contributes to recognition of the Chi site.</text>
</comment>
<comment type="similarity">
    <text evidence="1">Belongs to the helicase family. UvrD subfamily.</text>
</comment>
<sequence length="1211" mass="139858">MAETIPLNPITLPLNQISLIEASAGTGKTYTIGSLYLRLLLKAGENNFSRPLNVEEILVVTFTEMATEELKKKIRERITDAINKLTAFAKTQDKSAFKNDEFLTALCDNLNIFEAIHRLKLAEQNMDLAAIYTIHGFCRRMLMQYAFHSGIHFNLELIKDQSDLLVRFANEFWREHFYPLDFESANFIATELVSPANVLSLLKADLGKDLQVEIENKQALSVPIQIFLPQYLGGYQKALNELKAFWLESADEISAIITNELVKDYPKDQLKSLNRKKYQVKRLGDWINKINQWSNNPRDYQINTTLKDYFLQSSIEKNCEESTDKNKDKKPATPFYSPIFADLEKRVNALMTPDLLSKLTLYHYRQGLQQKLLDYKLNHQEKSFDDLLRLLCEALQDAQGDELAEMIRFQYPFAMIDEFQDTDSQQYAIFSKIYRDNPEKNTGFIMIGDPKQAIYRFRGADIFTYLKASDEAQSRFELTKNYRSEKHLVDGVNALFDFPQSPFIYQNIKFTAVDSRDDHLRFYLNGKVEPAYRFYLTESDKVNKTEMAKICAISIQHWLKSAAENQAVFQNEDTYKTLQAANIAVLVRDKNEAALVKNELQKLGIASVYLSDQNSVFDSNVAKELAWVLKACLNVAERPILNAIATALFGLNAADIHQIQQNEADWQRWADSFAQYQQTWQRQGILAMLHQILLEQGISERLLSQATGERDLTDFLHLAEILQQAATLHESEAALLSWFEKQIQGEARQEAQIRLESERQLVKIVTIHKSKGLEYDLVWLPFLAAPSKDPSKKYINIYYSKERDETLWDIENRNLNALCEETFAEELRLLYVALTRAKYQMAFALPAQFDKKWNALHYVLSQGEIGKEINLSDSKDTETLLQTFKEKMQDNVEICTKPNLEALPTLSINTKNDDFKASEFTGNIEQDWRITSFTSIEQAHRRQNYFTESAGKKHAVFDDAKDYDSQNAIEISTALLNENESNILDLPRGKQVGTALHRHFENCYFSDLANTEEIDKLRQSLQLDETFTESLQNWLQQISHTPLSNEIGIALADLANKDCIKEMPFYLAIREHFDVEAFNHTLKAHHHLPSESLQFEQIQGMVRGSIDLVFRHNGKYYLVDYKSNFLGSTLADYNQEALKKEMLHSHYDWQYLIYTLALHRYLQSVVPHYDYARDFGGVFYLFLRGMNGEPQSGVFYDRPSVELITELDGVF</sequence>
<evidence type="ECO:0000255" key="1">
    <source>
        <dbReference type="HAMAP-Rule" id="MF_01485"/>
    </source>
</evidence>
<accession>P45157</accession>
<reference key="1">
    <citation type="journal article" date="1995" name="Science">
        <title>Whole-genome random sequencing and assembly of Haemophilus influenzae Rd.</title>
        <authorList>
            <person name="Fleischmann R.D."/>
            <person name="Adams M.D."/>
            <person name="White O."/>
            <person name="Clayton R.A."/>
            <person name="Kirkness E.F."/>
            <person name="Kerlavage A.R."/>
            <person name="Bult C.J."/>
            <person name="Tomb J.-F."/>
            <person name="Dougherty B.A."/>
            <person name="Merrick J.M."/>
            <person name="McKenney K."/>
            <person name="Sutton G.G."/>
            <person name="FitzHugh W."/>
            <person name="Fields C.A."/>
            <person name="Gocayne J.D."/>
            <person name="Scott J.D."/>
            <person name="Shirley R."/>
            <person name="Liu L.-I."/>
            <person name="Glodek A."/>
            <person name="Kelley J.M."/>
            <person name="Weidman J.F."/>
            <person name="Phillips C.A."/>
            <person name="Spriggs T."/>
            <person name="Hedblom E."/>
            <person name="Cotton M.D."/>
            <person name="Utterback T.R."/>
            <person name="Hanna M.C."/>
            <person name="Nguyen D.T."/>
            <person name="Saudek D.M."/>
            <person name="Brandon R.C."/>
            <person name="Fine L.D."/>
            <person name="Fritchman J.L."/>
            <person name="Fuhrmann J.L."/>
            <person name="Geoghagen N.S.M."/>
            <person name="Gnehm C.L."/>
            <person name="McDonald L.A."/>
            <person name="Small K.V."/>
            <person name="Fraser C.M."/>
            <person name="Smith H.O."/>
            <person name="Venter J.C."/>
        </authorList>
    </citation>
    <scope>NUCLEOTIDE SEQUENCE [LARGE SCALE GENOMIC DNA]</scope>
    <source>
        <strain>ATCC 51907 / DSM 11121 / KW20 / Rd</strain>
    </source>
</reference>
<name>RECB_HAEIN</name>